<reference key="1">
    <citation type="journal article" date="1995" name="Genetics">
        <title>Complete sequence of a sea lamprey (Petromyzon marinus) mitochondrial genome: early establishment of the vertebrate genome organization.</title>
        <authorList>
            <person name="Lee W.J."/>
            <person name="Kocher T.D."/>
        </authorList>
    </citation>
    <scope>NUCLEOTIDE SEQUENCE [GENOMIC DNA]</scope>
</reference>
<gene>
    <name type="primary">MT-CO1</name>
    <name type="synonym">COI</name>
    <name type="synonym">COXI</name>
    <name type="synonym">MTCO1</name>
</gene>
<evidence type="ECO:0000250" key="1">
    <source>
        <dbReference type="UniProtKB" id="P00395"/>
    </source>
</evidence>
<evidence type="ECO:0000250" key="2">
    <source>
        <dbReference type="UniProtKB" id="P00396"/>
    </source>
</evidence>
<evidence type="ECO:0000250" key="3">
    <source>
        <dbReference type="UniProtKB" id="P00401"/>
    </source>
</evidence>
<evidence type="ECO:0000305" key="4"/>
<name>COX1_PETMA</name>
<organism>
    <name type="scientific">Petromyzon marinus</name>
    <name type="common">Sea lamprey</name>
    <dbReference type="NCBI Taxonomy" id="7757"/>
    <lineage>
        <taxon>Eukaryota</taxon>
        <taxon>Metazoa</taxon>
        <taxon>Chordata</taxon>
        <taxon>Craniata</taxon>
        <taxon>Vertebrata</taxon>
        <taxon>Cyclostomata</taxon>
        <taxon>Hyperoartia</taxon>
        <taxon>Petromyzontiformes</taxon>
        <taxon>Petromyzontidae</taxon>
        <taxon>Petromyzon</taxon>
    </lineage>
</organism>
<geneLocation type="mitochondrion"/>
<dbReference type="EC" id="7.1.1.9"/>
<dbReference type="EMBL" id="U11880">
    <property type="protein sequence ID" value="AAB08740.1"/>
    <property type="molecule type" value="Genomic_DNA"/>
</dbReference>
<dbReference type="PIR" id="S55006">
    <property type="entry name" value="S55006"/>
</dbReference>
<dbReference type="SMR" id="Q35536"/>
<dbReference type="STRING" id="7757.ENSPMAP00000011433"/>
<dbReference type="Ensembl" id="ENSPMAT00000014122.1">
    <property type="protein sequence ID" value="ENSPMAP00000011433.1"/>
    <property type="gene ID" value="ENSPMAG00000013095.1"/>
</dbReference>
<dbReference type="KEGG" id="pmrn:807802"/>
<dbReference type="CTD" id="4512"/>
<dbReference type="GeneTree" id="ENSGT00390000001518"/>
<dbReference type="HOGENOM" id="CLU_011899_7_3_1"/>
<dbReference type="OMA" id="WAMMSIG"/>
<dbReference type="OrthoDB" id="10002679at2759"/>
<dbReference type="UniPathway" id="UPA00705"/>
<dbReference type="Proteomes" id="UP001318040">
    <property type="component" value="Mitochondrion MT"/>
</dbReference>
<dbReference type="GO" id="GO:0005743">
    <property type="term" value="C:mitochondrial inner membrane"/>
    <property type="evidence" value="ECO:0007669"/>
    <property type="project" value="UniProtKB-SubCell"/>
</dbReference>
<dbReference type="GO" id="GO:0045277">
    <property type="term" value="C:respiratory chain complex IV"/>
    <property type="evidence" value="ECO:0000250"/>
    <property type="project" value="UniProtKB"/>
</dbReference>
<dbReference type="GO" id="GO:0004129">
    <property type="term" value="F:cytochrome-c oxidase activity"/>
    <property type="evidence" value="ECO:0007669"/>
    <property type="project" value="UniProtKB-EC"/>
</dbReference>
<dbReference type="GO" id="GO:0020037">
    <property type="term" value="F:heme binding"/>
    <property type="evidence" value="ECO:0007669"/>
    <property type="project" value="InterPro"/>
</dbReference>
<dbReference type="GO" id="GO:0046872">
    <property type="term" value="F:metal ion binding"/>
    <property type="evidence" value="ECO:0007669"/>
    <property type="project" value="UniProtKB-KW"/>
</dbReference>
<dbReference type="GO" id="GO:0015990">
    <property type="term" value="P:electron transport coupled proton transport"/>
    <property type="evidence" value="ECO:0007669"/>
    <property type="project" value="TreeGrafter"/>
</dbReference>
<dbReference type="GO" id="GO:0006123">
    <property type="term" value="P:mitochondrial electron transport, cytochrome c to oxygen"/>
    <property type="evidence" value="ECO:0007669"/>
    <property type="project" value="TreeGrafter"/>
</dbReference>
<dbReference type="GO" id="GO:0046686">
    <property type="term" value="P:response to cadmium ion"/>
    <property type="evidence" value="ECO:0007669"/>
    <property type="project" value="Ensembl"/>
</dbReference>
<dbReference type="GO" id="GO:0051597">
    <property type="term" value="P:response to methylmercury"/>
    <property type="evidence" value="ECO:0007669"/>
    <property type="project" value="Ensembl"/>
</dbReference>
<dbReference type="CDD" id="cd01663">
    <property type="entry name" value="Cyt_c_Oxidase_I"/>
    <property type="match status" value="1"/>
</dbReference>
<dbReference type="FunFam" id="1.20.210.10:FF:000001">
    <property type="entry name" value="Cytochrome c oxidase subunit 1"/>
    <property type="match status" value="1"/>
</dbReference>
<dbReference type="Gene3D" id="1.20.210.10">
    <property type="entry name" value="Cytochrome c oxidase-like, subunit I domain"/>
    <property type="match status" value="1"/>
</dbReference>
<dbReference type="InterPro" id="IPR023616">
    <property type="entry name" value="Cyt_c_oxase-like_su1_dom"/>
</dbReference>
<dbReference type="InterPro" id="IPR036927">
    <property type="entry name" value="Cyt_c_oxase-like_su1_sf"/>
</dbReference>
<dbReference type="InterPro" id="IPR000883">
    <property type="entry name" value="Cyt_C_Oxase_1"/>
</dbReference>
<dbReference type="InterPro" id="IPR023615">
    <property type="entry name" value="Cyt_c_Oxase_su1_BS"/>
</dbReference>
<dbReference type="InterPro" id="IPR033944">
    <property type="entry name" value="Cyt_c_oxase_su1_dom"/>
</dbReference>
<dbReference type="PANTHER" id="PTHR10422">
    <property type="entry name" value="CYTOCHROME C OXIDASE SUBUNIT 1"/>
    <property type="match status" value="1"/>
</dbReference>
<dbReference type="PANTHER" id="PTHR10422:SF18">
    <property type="entry name" value="CYTOCHROME C OXIDASE SUBUNIT 1"/>
    <property type="match status" value="1"/>
</dbReference>
<dbReference type="Pfam" id="PF00115">
    <property type="entry name" value="COX1"/>
    <property type="match status" value="1"/>
</dbReference>
<dbReference type="PRINTS" id="PR01165">
    <property type="entry name" value="CYCOXIDASEI"/>
</dbReference>
<dbReference type="SUPFAM" id="SSF81442">
    <property type="entry name" value="Cytochrome c oxidase subunit I-like"/>
    <property type="match status" value="1"/>
</dbReference>
<dbReference type="PROSITE" id="PS50855">
    <property type="entry name" value="COX1"/>
    <property type="match status" value="1"/>
</dbReference>
<dbReference type="PROSITE" id="PS00077">
    <property type="entry name" value="COX1_CUB"/>
    <property type="match status" value="1"/>
</dbReference>
<sequence>MTHIRWLFSTNHKDIGTLYLIFGAWAGMVGTALSILIRAELSQPGTLLGDDQIFNVIVTAHAFVMIFFMVMPIMIGGFGNWLVPLMLGAPDMAFPRMNNMSFWLLPPSLLLLLASAGVEAGAGTGWTVYPPLAGNLAHTGASVDLTIFSLHLAGVSSILGAVNFITTIFNMKPPTMTQYQTPLFVWSVLITAVLLLLSLPVLAAAITMLLTDRNLNTSFFDPAGGGDPILYQHLFWFFGHPEVYILILPGFGIISHVVAYYAGKKEPFGYMGMVWAMMAIGLLGFIVWAHHMFTVGMDVDTRAYFTSATMIIAIPTGVKVFSWLATLHGGKIVWHTPMLWALGFIFLFTVGGLTGIVLSNSSLDIILHDTYYVVAHFHYVLSMGAVFAIMAGFVHWFPLFTGYTLNETWAKAHFIIMFAGVNLTFFPQHFLGLAGMPRRYSDYPDAYTTWNIISSIGSTVSLIAVMLFMFILWEAFSAKRKAIATDLLNTNLEWLHGCPPPYHTYEEPAFVQTNFKK</sequence>
<accession>Q35536</accession>
<proteinExistence type="inferred from homology"/>
<feature type="chain" id="PRO_0000183387" description="Cytochrome c oxidase subunit 1">
    <location>
        <begin position="1"/>
        <end position="517"/>
    </location>
</feature>
<feature type="topological domain" description="Mitochondrial matrix" evidence="2">
    <location>
        <begin position="1"/>
        <end position="11"/>
    </location>
</feature>
<feature type="transmembrane region" description="Helical; Name=I" evidence="2">
    <location>
        <begin position="12"/>
        <end position="40"/>
    </location>
</feature>
<feature type="topological domain" description="Mitochondrial intermembrane" evidence="2">
    <location>
        <begin position="41"/>
        <end position="50"/>
    </location>
</feature>
<feature type="transmembrane region" description="Helical; Name=II" evidence="2">
    <location>
        <begin position="51"/>
        <end position="86"/>
    </location>
</feature>
<feature type="topological domain" description="Mitochondrial matrix" evidence="2">
    <location>
        <begin position="87"/>
        <end position="94"/>
    </location>
</feature>
<feature type="transmembrane region" description="Helical; Name=III" evidence="2">
    <location>
        <begin position="95"/>
        <end position="117"/>
    </location>
</feature>
<feature type="topological domain" description="Mitochondrial intermembrane" evidence="2">
    <location>
        <begin position="118"/>
        <end position="140"/>
    </location>
</feature>
<feature type="transmembrane region" description="Helical; Name=IV" evidence="2">
    <location>
        <begin position="141"/>
        <end position="170"/>
    </location>
</feature>
<feature type="topological domain" description="Mitochondrial matrix" evidence="2">
    <location>
        <begin position="171"/>
        <end position="182"/>
    </location>
</feature>
<feature type="transmembrane region" description="Helical; Name=V" evidence="2">
    <location>
        <begin position="183"/>
        <end position="212"/>
    </location>
</feature>
<feature type="topological domain" description="Mitochondrial intermembrane" evidence="2">
    <location>
        <begin position="213"/>
        <end position="227"/>
    </location>
</feature>
<feature type="transmembrane region" description="Helical; Name=VI" evidence="2">
    <location>
        <begin position="228"/>
        <end position="261"/>
    </location>
</feature>
<feature type="topological domain" description="Mitochondrial matrix" evidence="2">
    <location>
        <begin position="262"/>
        <end position="269"/>
    </location>
</feature>
<feature type="transmembrane region" description="Helical; Name=VII" evidence="2">
    <location>
        <begin position="270"/>
        <end position="286"/>
    </location>
</feature>
<feature type="topological domain" description="Mitochondrial intermembrane" evidence="2">
    <location>
        <begin position="287"/>
        <end position="298"/>
    </location>
</feature>
<feature type="transmembrane region" description="Helical; Name=VIII" evidence="2">
    <location>
        <begin position="299"/>
        <end position="327"/>
    </location>
</feature>
<feature type="topological domain" description="Mitochondrial matrix" evidence="2">
    <location>
        <begin position="328"/>
        <end position="335"/>
    </location>
</feature>
<feature type="transmembrane region" description="Helical; Name=IX" evidence="2">
    <location>
        <begin position="336"/>
        <end position="357"/>
    </location>
</feature>
<feature type="topological domain" description="Mitochondrial intermembrane" evidence="2">
    <location>
        <begin position="358"/>
        <end position="370"/>
    </location>
</feature>
<feature type="transmembrane region" description="Helical; Name=X" evidence="2">
    <location>
        <begin position="371"/>
        <end position="400"/>
    </location>
</feature>
<feature type="topological domain" description="Mitochondrial matrix" evidence="2">
    <location>
        <begin position="401"/>
        <end position="406"/>
    </location>
</feature>
<feature type="transmembrane region" description="Helical; Name=XI" evidence="2">
    <location>
        <begin position="407"/>
        <end position="433"/>
    </location>
</feature>
<feature type="topological domain" description="Mitochondrial intermembrane" evidence="2">
    <location>
        <begin position="434"/>
        <end position="446"/>
    </location>
</feature>
<feature type="transmembrane region" description="Helical; Name=XII" evidence="2">
    <location>
        <begin position="447"/>
        <end position="478"/>
    </location>
</feature>
<feature type="topological domain" description="Mitochondrial matrix" evidence="2">
    <location>
        <begin position="479"/>
        <end position="517"/>
    </location>
</feature>
<feature type="binding site" evidence="2">
    <location>
        <position position="40"/>
    </location>
    <ligand>
        <name>Na(+)</name>
        <dbReference type="ChEBI" id="CHEBI:29101"/>
    </ligand>
</feature>
<feature type="binding site" evidence="2">
    <location>
        <position position="45"/>
    </location>
    <ligand>
        <name>Na(+)</name>
        <dbReference type="ChEBI" id="CHEBI:29101"/>
    </ligand>
</feature>
<feature type="binding site" description="axial binding residue" evidence="2">
    <location>
        <position position="61"/>
    </location>
    <ligand>
        <name>Fe(II)-heme a</name>
        <dbReference type="ChEBI" id="CHEBI:61715"/>
        <note>low-spin</note>
    </ligand>
    <ligandPart>
        <name>Fe</name>
        <dbReference type="ChEBI" id="CHEBI:18248"/>
    </ligandPart>
</feature>
<feature type="binding site" evidence="2">
    <location>
        <position position="240"/>
    </location>
    <ligand>
        <name>Cu cation</name>
        <dbReference type="ChEBI" id="CHEBI:23378"/>
        <label>B</label>
    </ligand>
</feature>
<feature type="binding site" evidence="2">
    <location>
        <position position="244"/>
    </location>
    <ligand>
        <name>O2</name>
        <dbReference type="ChEBI" id="CHEBI:15379"/>
    </ligand>
</feature>
<feature type="binding site" evidence="2">
    <location>
        <position position="290"/>
    </location>
    <ligand>
        <name>Cu cation</name>
        <dbReference type="ChEBI" id="CHEBI:23378"/>
        <label>B</label>
    </ligand>
</feature>
<feature type="binding site" evidence="2">
    <location>
        <position position="291"/>
    </location>
    <ligand>
        <name>Cu cation</name>
        <dbReference type="ChEBI" id="CHEBI:23378"/>
        <label>B</label>
    </ligand>
</feature>
<feature type="binding site" evidence="2">
    <location>
        <position position="368"/>
    </location>
    <ligand>
        <name>Mg(2+)</name>
        <dbReference type="ChEBI" id="CHEBI:18420"/>
        <note>ligand shared with MT-CO2</note>
    </ligand>
</feature>
<feature type="binding site" evidence="2">
    <location>
        <position position="369"/>
    </location>
    <ligand>
        <name>Mg(2+)</name>
        <dbReference type="ChEBI" id="CHEBI:18420"/>
        <note>ligand shared with MT-CO2</note>
    </ligand>
</feature>
<feature type="binding site" description="axial binding residue" evidence="2">
    <location>
        <position position="376"/>
    </location>
    <ligand>
        <name>heme a3</name>
        <dbReference type="ChEBI" id="CHEBI:83282"/>
        <note>high-spin</note>
    </ligand>
    <ligandPart>
        <name>Fe</name>
        <dbReference type="ChEBI" id="CHEBI:18248"/>
    </ligandPart>
</feature>
<feature type="binding site" description="axial binding residue" evidence="2">
    <location>
        <position position="378"/>
    </location>
    <ligand>
        <name>Fe(II)-heme a</name>
        <dbReference type="ChEBI" id="CHEBI:61715"/>
        <note>low-spin</note>
    </ligand>
    <ligandPart>
        <name>Fe</name>
        <dbReference type="ChEBI" id="CHEBI:18248"/>
    </ligandPart>
</feature>
<feature type="binding site" evidence="2">
    <location>
        <position position="441"/>
    </location>
    <ligand>
        <name>Na(+)</name>
        <dbReference type="ChEBI" id="CHEBI:29101"/>
    </ligand>
</feature>
<feature type="cross-link" description="1'-histidyl-3'-tyrosine (His-Tyr)" evidence="2">
    <location>
        <begin position="240"/>
        <end position="244"/>
    </location>
</feature>
<protein>
    <recommendedName>
        <fullName>Cytochrome c oxidase subunit 1</fullName>
        <ecNumber>7.1.1.9</ecNumber>
    </recommendedName>
    <alternativeName>
        <fullName>Cytochrome c oxidase polypeptide I</fullName>
    </alternativeName>
</protein>
<keyword id="KW-0106">Calcium</keyword>
<keyword id="KW-0186">Copper</keyword>
<keyword id="KW-0249">Electron transport</keyword>
<keyword id="KW-0349">Heme</keyword>
<keyword id="KW-0408">Iron</keyword>
<keyword id="KW-0460">Magnesium</keyword>
<keyword id="KW-0472">Membrane</keyword>
<keyword id="KW-0479">Metal-binding</keyword>
<keyword id="KW-0496">Mitochondrion</keyword>
<keyword id="KW-0999">Mitochondrion inner membrane</keyword>
<keyword id="KW-0679">Respiratory chain</keyword>
<keyword id="KW-0915">Sodium</keyword>
<keyword id="KW-1278">Translocase</keyword>
<keyword id="KW-0812">Transmembrane</keyword>
<keyword id="KW-1133">Transmembrane helix</keyword>
<keyword id="KW-0813">Transport</keyword>
<comment type="function">
    <text evidence="3">Component of the cytochrome c oxidase, the last enzyme in the mitochondrial electron transport chain which drives oxidative phosphorylation. The respiratory chain contains 3 multisubunit complexes succinate dehydrogenase (complex II, CII), ubiquinol-cytochrome c oxidoreductase (cytochrome b-c1 complex, complex III, CIII) and cytochrome c oxidase (complex IV, CIV), that cooperate to transfer electrons derived from NADH and succinate to molecular oxygen, creating an electrochemical gradient over the inner membrane that drives transmembrane transport and the ATP synthase. Cytochrome c oxidase is the component of the respiratory chain that catalyzes the reduction of oxygen to water. Electrons originating from reduced cytochrome c in the intermembrane space (IMS) are transferred via the dinuclear copper A center (CU(A)) of subunit 2 and heme A of subunit 1 to the active site in subunit 1, a binuclear center (BNC) formed by heme A3 and copper B (CU(B)). The BNC reduces molecular oxygen to 2 water molecules using 4 electrons from cytochrome c in the IMS and 4 protons from the mitochondrial matrix.</text>
</comment>
<comment type="catalytic activity">
    <reaction evidence="3">
        <text>4 Fe(II)-[cytochrome c] + O2 + 8 H(+)(in) = 4 Fe(III)-[cytochrome c] + 2 H2O + 4 H(+)(out)</text>
        <dbReference type="Rhea" id="RHEA:11436"/>
        <dbReference type="Rhea" id="RHEA-COMP:10350"/>
        <dbReference type="Rhea" id="RHEA-COMP:14399"/>
        <dbReference type="ChEBI" id="CHEBI:15377"/>
        <dbReference type="ChEBI" id="CHEBI:15378"/>
        <dbReference type="ChEBI" id="CHEBI:15379"/>
        <dbReference type="ChEBI" id="CHEBI:29033"/>
        <dbReference type="ChEBI" id="CHEBI:29034"/>
        <dbReference type="EC" id="7.1.1.9"/>
    </reaction>
    <physiologicalReaction direction="left-to-right" evidence="3">
        <dbReference type="Rhea" id="RHEA:11437"/>
    </physiologicalReaction>
</comment>
<comment type="cofactor">
    <cofactor evidence="2">
        <name>heme</name>
        <dbReference type="ChEBI" id="CHEBI:30413"/>
    </cofactor>
    <text evidence="2">Binds 2 heme A groups non-covalently per subunit.</text>
</comment>
<comment type="cofactor">
    <cofactor evidence="2">
        <name>Cu cation</name>
        <dbReference type="ChEBI" id="CHEBI:23378"/>
    </cofactor>
    <text evidence="2">Binds a copper B center.</text>
</comment>
<comment type="pathway">
    <text evidence="3">Energy metabolism; oxidative phosphorylation.</text>
</comment>
<comment type="subunit">
    <text evidence="1 2">Component of the cytochrome c oxidase (complex IV, CIV), a multisubunit enzyme composed of 14 subunits. The complex is composed of a catalytic core of 3 subunits MT-CO1, MT-CO2 and MT-CO3, encoded in the mitochondrial DNA, and 11 supernumerary subunits COX4I, COX5A, COX5B, COX6A, COX6B, COX6C, COX7A, COX7B, COX7C, COX8 and NDUFA4, which are encoded in the nuclear genome. The complex exists as a monomer or a dimer and forms supercomplexes (SCs) in the inner mitochondrial membrane with NADH-ubiquinone oxidoreductase (complex I, CI) and ubiquinol-cytochrome c oxidoreductase (cytochrome b-c1 complex, complex III, CIII), resulting in different assemblies (supercomplex SCI(1)III(2)IV(1) and megacomplex MCI(2)III(2)IV(2)) (By similarity). As a newly synthesized protein, rapidly incorporates into a multi-subunit assembly intermediate in the inner membrane, called MITRAC (mitochondrial translation regulation assembly intermediate of cytochrome c oxidase) complex, whose core components are COA3/MITRAC12 and COX14. Within the MITRAC complex, interacts with COA3 and with SMIM20/MITRAC7; the interaction with SMIM20 stabilizes the newly synthesized MT-CO1 and prevents its premature turnover. Interacts with TMEM177 in a COX20-dependent manner (By similarity).</text>
</comment>
<comment type="subcellular location">
    <subcellularLocation>
        <location evidence="2">Mitochondrion inner membrane</location>
        <topology evidence="2">Multi-pass membrane protein</topology>
    </subcellularLocation>
</comment>
<comment type="similarity">
    <text evidence="4">Belongs to the heme-copper respiratory oxidase family.</text>
</comment>